<accession>A5ITT7</accession>
<evidence type="ECO:0000255" key="1">
    <source>
        <dbReference type="HAMAP-Rule" id="MF_00178"/>
    </source>
</evidence>
<feature type="chain" id="PRO_1000077252" description="6,7-dimethyl-8-ribityllumazine synthase">
    <location>
        <begin position="1"/>
        <end position="154"/>
    </location>
</feature>
<feature type="active site" description="Proton donor" evidence="1">
    <location>
        <position position="87"/>
    </location>
</feature>
<feature type="binding site" evidence="1">
    <location>
        <position position="21"/>
    </location>
    <ligand>
        <name>5-amino-6-(D-ribitylamino)uracil</name>
        <dbReference type="ChEBI" id="CHEBI:15934"/>
    </ligand>
</feature>
<feature type="binding site" evidence="1">
    <location>
        <begin position="55"/>
        <end position="57"/>
    </location>
    <ligand>
        <name>5-amino-6-(D-ribitylamino)uracil</name>
        <dbReference type="ChEBI" id="CHEBI:15934"/>
    </ligand>
</feature>
<feature type="binding site" evidence="1">
    <location>
        <begin position="79"/>
        <end position="81"/>
    </location>
    <ligand>
        <name>5-amino-6-(D-ribitylamino)uracil</name>
        <dbReference type="ChEBI" id="CHEBI:15934"/>
    </ligand>
</feature>
<feature type="binding site" evidence="1">
    <location>
        <begin position="84"/>
        <end position="85"/>
    </location>
    <ligand>
        <name>(2S)-2-hydroxy-3-oxobutyl phosphate</name>
        <dbReference type="ChEBI" id="CHEBI:58830"/>
    </ligand>
</feature>
<feature type="binding site" evidence="1">
    <location>
        <position position="112"/>
    </location>
    <ligand>
        <name>5-amino-6-(D-ribitylamino)uracil</name>
        <dbReference type="ChEBI" id="CHEBI:15934"/>
    </ligand>
</feature>
<feature type="binding site" evidence="1">
    <location>
        <position position="126"/>
    </location>
    <ligand>
        <name>(2S)-2-hydroxy-3-oxobutyl phosphate</name>
        <dbReference type="ChEBI" id="CHEBI:58830"/>
    </ligand>
</feature>
<gene>
    <name evidence="1" type="primary">ribH</name>
    <name type="ordered locus">SaurJH9_1820</name>
</gene>
<protein>
    <recommendedName>
        <fullName evidence="1">6,7-dimethyl-8-ribityllumazine synthase</fullName>
        <shortName evidence="1">DMRL synthase</shortName>
        <shortName evidence="1">LS</shortName>
        <shortName evidence="1">Lumazine synthase</shortName>
        <ecNumber evidence="1">2.5.1.78</ecNumber>
    </recommendedName>
</protein>
<name>RISB_STAA9</name>
<sequence>MNFEGKLIGKDLKVAIVVSRFNDFITGRLLEGAKDTLIRHDVNEDNIDVAFVPGAFEIPLVAKKLASSGNYDAIITLGCVIRGATSHYDYVCNEVAKGVSKVNDQTNVPVIFGILTTESIEQAVERAGTKAGNKGAEAAVSAIEMANLLKSIKA</sequence>
<keyword id="KW-0686">Riboflavin biosynthesis</keyword>
<keyword id="KW-0808">Transferase</keyword>
<organism>
    <name type="scientific">Staphylococcus aureus (strain JH9)</name>
    <dbReference type="NCBI Taxonomy" id="359786"/>
    <lineage>
        <taxon>Bacteria</taxon>
        <taxon>Bacillati</taxon>
        <taxon>Bacillota</taxon>
        <taxon>Bacilli</taxon>
        <taxon>Bacillales</taxon>
        <taxon>Staphylococcaceae</taxon>
        <taxon>Staphylococcus</taxon>
    </lineage>
</organism>
<reference key="1">
    <citation type="submission" date="2007-05" db="EMBL/GenBank/DDBJ databases">
        <title>Complete sequence of chromosome of Staphylococcus aureus subsp. aureus JH9.</title>
        <authorList>
            <consortium name="US DOE Joint Genome Institute"/>
            <person name="Copeland A."/>
            <person name="Lucas S."/>
            <person name="Lapidus A."/>
            <person name="Barry K."/>
            <person name="Detter J.C."/>
            <person name="Glavina del Rio T."/>
            <person name="Hammon N."/>
            <person name="Israni S."/>
            <person name="Pitluck S."/>
            <person name="Chain P."/>
            <person name="Malfatti S."/>
            <person name="Shin M."/>
            <person name="Vergez L."/>
            <person name="Schmutz J."/>
            <person name="Larimer F."/>
            <person name="Land M."/>
            <person name="Hauser L."/>
            <person name="Kyrpides N."/>
            <person name="Kim E."/>
            <person name="Tomasz A."/>
            <person name="Richardson P."/>
        </authorList>
    </citation>
    <scope>NUCLEOTIDE SEQUENCE [LARGE SCALE GENOMIC DNA]</scope>
    <source>
        <strain>JH9</strain>
    </source>
</reference>
<dbReference type="EC" id="2.5.1.78" evidence="1"/>
<dbReference type="EMBL" id="CP000703">
    <property type="protein sequence ID" value="ABQ49610.1"/>
    <property type="molecule type" value="Genomic_DNA"/>
</dbReference>
<dbReference type="SMR" id="A5ITT7"/>
<dbReference type="KEGG" id="saj:SaurJH9_1820"/>
<dbReference type="HOGENOM" id="CLU_089358_1_1_9"/>
<dbReference type="UniPathway" id="UPA00275">
    <property type="reaction ID" value="UER00404"/>
</dbReference>
<dbReference type="GO" id="GO:0005829">
    <property type="term" value="C:cytosol"/>
    <property type="evidence" value="ECO:0007669"/>
    <property type="project" value="TreeGrafter"/>
</dbReference>
<dbReference type="GO" id="GO:0009349">
    <property type="term" value="C:riboflavin synthase complex"/>
    <property type="evidence" value="ECO:0007669"/>
    <property type="project" value="InterPro"/>
</dbReference>
<dbReference type="GO" id="GO:0000906">
    <property type="term" value="F:6,7-dimethyl-8-ribityllumazine synthase activity"/>
    <property type="evidence" value="ECO:0007669"/>
    <property type="project" value="UniProtKB-UniRule"/>
</dbReference>
<dbReference type="GO" id="GO:0009231">
    <property type="term" value="P:riboflavin biosynthetic process"/>
    <property type="evidence" value="ECO:0007669"/>
    <property type="project" value="UniProtKB-UniRule"/>
</dbReference>
<dbReference type="CDD" id="cd09209">
    <property type="entry name" value="Lumazine_synthase-I"/>
    <property type="match status" value="1"/>
</dbReference>
<dbReference type="FunFam" id="3.40.50.960:FF:000001">
    <property type="entry name" value="6,7-dimethyl-8-ribityllumazine synthase"/>
    <property type="match status" value="1"/>
</dbReference>
<dbReference type="Gene3D" id="3.40.50.960">
    <property type="entry name" value="Lumazine/riboflavin synthase"/>
    <property type="match status" value="1"/>
</dbReference>
<dbReference type="HAMAP" id="MF_00178">
    <property type="entry name" value="Lumazine_synth"/>
    <property type="match status" value="1"/>
</dbReference>
<dbReference type="InterPro" id="IPR034964">
    <property type="entry name" value="LS"/>
</dbReference>
<dbReference type="InterPro" id="IPR002180">
    <property type="entry name" value="LS/RS"/>
</dbReference>
<dbReference type="InterPro" id="IPR036467">
    <property type="entry name" value="LS/RS_sf"/>
</dbReference>
<dbReference type="NCBIfam" id="TIGR00114">
    <property type="entry name" value="lumazine-synth"/>
    <property type="match status" value="1"/>
</dbReference>
<dbReference type="NCBIfam" id="NF000812">
    <property type="entry name" value="PRK00061.1-4"/>
    <property type="match status" value="1"/>
</dbReference>
<dbReference type="PANTHER" id="PTHR21058:SF0">
    <property type="entry name" value="6,7-DIMETHYL-8-RIBITYLLUMAZINE SYNTHASE"/>
    <property type="match status" value="1"/>
</dbReference>
<dbReference type="PANTHER" id="PTHR21058">
    <property type="entry name" value="6,7-DIMETHYL-8-RIBITYLLUMAZINE SYNTHASE DMRL SYNTHASE LUMAZINE SYNTHASE"/>
    <property type="match status" value="1"/>
</dbReference>
<dbReference type="Pfam" id="PF00885">
    <property type="entry name" value="DMRL_synthase"/>
    <property type="match status" value="1"/>
</dbReference>
<dbReference type="SUPFAM" id="SSF52121">
    <property type="entry name" value="Lumazine synthase"/>
    <property type="match status" value="1"/>
</dbReference>
<comment type="function">
    <text evidence="1">Catalyzes the formation of 6,7-dimethyl-8-ribityllumazine by condensation of 5-amino-6-(D-ribitylamino)uracil with 3,4-dihydroxy-2-butanone 4-phosphate. This is the penultimate step in the biosynthesis of riboflavin.</text>
</comment>
<comment type="catalytic activity">
    <reaction evidence="1">
        <text>(2S)-2-hydroxy-3-oxobutyl phosphate + 5-amino-6-(D-ribitylamino)uracil = 6,7-dimethyl-8-(1-D-ribityl)lumazine + phosphate + 2 H2O + H(+)</text>
        <dbReference type="Rhea" id="RHEA:26152"/>
        <dbReference type="ChEBI" id="CHEBI:15377"/>
        <dbReference type="ChEBI" id="CHEBI:15378"/>
        <dbReference type="ChEBI" id="CHEBI:15934"/>
        <dbReference type="ChEBI" id="CHEBI:43474"/>
        <dbReference type="ChEBI" id="CHEBI:58201"/>
        <dbReference type="ChEBI" id="CHEBI:58830"/>
        <dbReference type="EC" id="2.5.1.78"/>
    </reaction>
</comment>
<comment type="pathway">
    <text evidence="1">Cofactor biosynthesis; riboflavin biosynthesis; riboflavin from 2-hydroxy-3-oxobutyl phosphate and 5-amino-6-(D-ribitylamino)uracil: step 1/2.</text>
</comment>
<comment type="subunit">
    <text evidence="1">Forms an icosahedral capsid composed of 60 subunits, arranged as a dodecamer of pentamers.</text>
</comment>
<comment type="similarity">
    <text evidence="1">Belongs to the DMRL synthase family.</text>
</comment>
<proteinExistence type="inferred from homology"/>